<keyword id="KW-0342">GTP-binding</keyword>
<keyword id="KW-0378">Hydrolase</keyword>
<keyword id="KW-0479">Metal-binding</keyword>
<keyword id="KW-0547">Nucleotide-binding</keyword>
<keyword id="KW-1185">Reference proteome</keyword>
<keyword id="KW-0686">Riboflavin biosynthesis</keyword>
<keyword id="KW-0862">Zinc</keyword>
<dbReference type="EC" id="3.5.4.25"/>
<dbReference type="EMBL" id="AE000782">
    <property type="protein sequence ID" value="AAB90751.1"/>
    <property type="molecule type" value="Genomic_DNA"/>
</dbReference>
<dbReference type="PIR" id="D69310">
    <property type="entry name" value="D69310"/>
</dbReference>
<dbReference type="RefSeq" id="WP_010877991.1">
    <property type="nucleotide sequence ID" value="NC_000917.1"/>
</dbReference>
<dbReference type="SMR" id="O29766"/>
<dbReference type="STRING" id="224325.AF_0484"/>
<dbReference type="PaxDb" id="224325-AF_0484"/>
<dbReference type="EnsemblBacteria" id="AAB90751">
    <property type="protein sequence ID" value="AAB90751"/>
    <property type="gene ID" value="AF_0484"/>
</dbReference>
<dbReference type="GeneID" id="1483701"/>
<dbReference type="KEGG" id="afu:AF_0484"/>
<dbReference type="eggNOG" id="arCOG01321">
    <property type="taxonomic scope" value="Archaea"/>
</dbReference>
<dbReference type="HOGENOM" id="CLU_020273_1_2_2"/>
<dbReference type="OrthoDB" id="25735at2157"/>
<dbReference type="PhylomeDB" id="O29766"/>
<dbReference type="UniPathway" id="UPA00275">
    <property type="reaction ID" value="UER00400"/>
</dbReference>
<dbReference type="Proteomes" id="UP000002199">
    <property type="component" value="Chromosome"/>
</dbReference>
<dbReference type="GO" id="GO:0005829">
    <property type="term" value="C:cytosol"/>
    <property type="evidence" value="ECO:0007669"/>
    <property type="project" value="TreeGrafter"/>
</dbReference>
<dbReference type="GO" id="GO:0008686">
    <property type="term" value="F:3,4-dihydroxy-2-butanone-4-phosphate synthase activity"/>
    <property type="evidence" value="ECO:0007669"/>
    <property type="project" value="InterPro"/>
</dbReference>
<dbReference type="GO" id="GO:0005525">
    <property type="term" value="F:GTP binding"/>
    <property type="evidence" value="ECO:0007669"/>
    <property type="project" value="UniProtKB-KW"/>
</dbReference>
<dbReference type="GO" id="GO:0003935">
    <property type="term" value="F:GTP cyclohydrolase II activity"/>
    <property type="evidence" value="ECO:0007669"/>
    <property type="project" value="UniProtKB-UniRule"/>
</dbReference>
<dbReference type="GO" id="GO:0008270">
    <property type="term" value="F:zinc ion binding"/>
    <property type="evidence" value="ECO:0007669"/>
    <property type="project" value="UniProtKB-UniRule"/>
</dbReference>
<dbReference type="GO" id="GO:0009231">
    <property type="term" value="P:riboflavin biosynthetic process"/>
    <property type="evidence" value="ECO:0007669"/>
    <property type="project" value="UniProtKB-UniRule"/>
</dbReference>
<dbReference type="CDD" id="cd00641">
    <property type="entry name" value="GTP_cyclohydro2"/>
    <property type="match status" value="1"/>
</dbReference>
<dbReference type="FunFam" id="3.40.50.10990:FF:000001">
    <property type="entry name" value="Riboflavin biosynthesis protein RibBA"/>
    <property type="match status" value="1"/>
</dbReference>
<dbReference type="Gene3D" id="3.90.870.10">
    <property type="entry name" value="DHBP synthase"/>
    <property type="match status" value="1"/>
</dbReference>
<dbReference type="Gene3D" id="3.40.50.10990">
    <property type="entry name" value="GTP cyclohydrolase II"/>
    <property type="match status" value="1"/>
</dbReference>
<dbReference type="HAMAP" id="MF_00179">
    <property type="entry name" value="RibA"/>
    <property type="match status" value="1"/>
</dbReference>
<dbReference type="InterPro" id="IPR017945">
    <property type="entry name" value="DHBP_synth_RibB-like_a/b_dom"/>
</dbReference>
<dbReference type="InterPro" id="IPR000422">
    <property type="entry name" value="DHBP_synthase_RibB"/>
</dbReference>
<dbReference type="InterPro" id="IPR032677">
    <property type="entry name" value="GTP_cyclohydro_II"/>
</dbReference>
<dbReference type="InterPro" id="IPR000926">
    <property type="entry name" value="RibA"/>
</dbReference>
<dbReference type="InterPro" id="IPR036144">
    <property type="entry name" value="RibA-like_sf"/>
</dbReference>
<dbReference type="NCBIfam" id="NF001591">
    <property type="entry name" value="PRK00393.1"/>
    <property type="match status" value="1"/>
</dbReference>
<dbReference type="NCBIfam" id="TIGR00505">
    <property type="entry name" value="ribA"/>
    <property type="match status" value="1"/>
</dbReference>
<dbReference type="PANTHER" id="PTHR21327:SF18">
    <property type="entry name" value="3,4-DIHYDROXY-2-BUTANONE 4-PHOSPHATE SYNTHASE"/>
    <property type="match status" value="1"/>
</dbReference>
<dbReference type="PANTHER" id="PTHR21327">
    <property type="entry name" value="GTP CYCLOHYDROLASE II-RELATED"/>
    <property type="match status" value="1"/>
</dbReference>
<dbReference type="Pfam" id="PF00926">
    <property type="entry name" value="DHBP_synthase"/>
    <property type="match status" value="1"/>
</dbReference>
<dbReference type="Pfam" id="PF00925">
    <property type="entry name" value="GTP_cyclohydro2"/>
    <property type="match status" value="1"/>
</dbReference>
<dbReference type="PIRSF" id="PIRSF001259">
    <property type="entry name" value="RibA"/>
    <property type="match status" value="1"/>
</dbReference>
<dbReference type="SUPFAM" id="SSF142695">
    <property type="entry name" value="RibA-like"/>
    <property type="match status" value="1"/>
</dbReference>
<dbReference type="SUPFAM" id="SSF55821">
    <property type="entry name" value="YrdC/RibB"/>
    <property type="match status" value="1"/>
</dbReference>
<evidence type="ECO:0000250" key="1"/>
<evidence type="ECO:0000255" key="2"/>
<evidence type="ECO:0000305" key="3"/>
<sequence>MEEVSSHVKSGKPVMILDSEKSAICIPAEVVSGEILNFMMKNCDEIRLALTWKQILNLGLNRFRFQNGNLIPIDPNLEKISAEERAKFIRELVSGNAGDIKYPGRIFVEETKEMGVLERPGIAEACVDLARMAGFAPSAVYAPLMTAEGGVAGEDYALKFAKEHSMPVFRIKDMIEFRIKSEKIVERVIEATLPTKFYGTFRAVGYKTPLGEIVALVKGRVDEGDVLVRIHSECLTGDVFHSLRCDCGDQLENALKMIDREGKGVAIYMRGHEGRGIGLINKLMAYKLQEEGKDTVDANIELGFPPDMRSYGIAAQILMDLKVKSIRLLTNNPLKIEELKKYGFKIVREPIEVEPCEVNLPYLKAKKDKMGHLICFND</sequence>
<feature type="chain" id="PRO_0000151746" description="GTP cyclohydrolase-2">
    <location>
        <begin position="1"/>
        <end position="378"/>
    </location>
</feature>
<feature type="region of interest" description="DHBP synthase-like">
    <location>
        <begin position="1"/>
        <end position="180"/>
    </location>
</feature>
<feature type="region of interest" description="GTP cyclohydrolase II">
    <location>
        <begin position="181"/>
        <end position="378"/>
    </location>
</feature>
<feature type="active site" description="Proton acceptor" evidence="2">
    <location>
        <position position="307"/>
    </location>
</feature>
<feature type="active site" description="Nucleophile" evidence="1">
    <location>
        <position position="309"/>
    </location>
</feature>
<feature type="binding site" evidence="1">
    <location>
        <begin position="229"/>
        <end position="233"/>
    </location>
    <ligand>
        <name>GTP</name>
        <dbReference type="ChEBI" id="CHEBI:37565"/>
    </ligand>
</feature>
<feature type="binding site" evidence="1">
    <location>
        <position position="234"/>
    </location>
    <ligand>
        <name>Zn(2+)</name>
        <dbReference type="ChEBI" id="CHEBI:29105"/>
        <note>catalytic</note>
    </ligand>
</feature>
<feature type="binding site" evidence="1">
    <location>
        <position position="245"/>
    </location>
    <ligand>
        <name>Zn(2+)</name>
        <dbReference type="ChEBI" id="CHEBI:29105"/>
        <note>catalytic</note>
    </ligand>
</feature>
<feature type="binding site" evidence="1">
    <location>
        <position position="247"/>
    </location>
    <ligand>
        <name>Zn(2+)</name>
        <dbReference type="ChEBI" id="CHEBI:29105"/>
        <note>catalytic</note>
    </ligand>
</feature>
<feature type="binding site" evidence="1">
    <location>
        <position position="250"/>
    </location>
    <ligand>
        <name>GTP</name>
        <dbReference type="ChEBI" id="CHEBI:37565"/>
    </ligand>
</feature>
<feature type="binding site" evidence="1">
    <location>
        <begin position="273"/>
        <end position="275"/>
    </location>
    <ligand>
        <name>GTP</name>
        <dbReference type="ChEBI" id="CHEBI:37565"/>
    </ligand>
</feature>
<feature type="binding site" evidence="1">
    <location>
        <position position="295"/>
    </location>
    <ligand>
        <name>GTP</name>
        <dbReference type="ChEBI" id="CHEBI:37565"/>
    </ligand>
</feature>
<feature type="binding site" evidence="1">
    <location>
        <position position="330"/>
    </location>
    <ligand>
        <name>GTP</name>
        <dbReference type="ChEBI" id="CHEBI:37565"/>
    </ligand>
</feature>
<feature type="binding site" evidence="1">
    <location>
        <position position="335"/>
    </location>
    <ligand>
        <name>GTP</name>
        <dbReference type="ChEBI" id="CHEBI:37565"/>
    </ligand>
</feature>
<name>RIBA_ARCFU</name>
<gene>
    <name type="primary">ribA</name>
    <name type="ordered locus">AF_0484</name>
</gene>
<accession>O29766</accession>
<protein>
    <recommendedName>
        <fullName>GTP cyclohydrolase-2</fullName>
        <ecNumber>3.5.4.25</ecNumber>
    </recommendedName>
    <alternativeName>
        <fullName>GTP cyclohydrolase II</fullName>
    </alternativeName>
</protein>
<reference key="1">
    <citation type="journal article" date="1997" name="Nature">
        <title>The complete genome sequence of the hyperthermophilic, sulphate-reducing archaeon Archaeoglobus fulgidus.</title>
        <authorList>
            <person name="Klenk H.-P."/>
            <person name="Clayton R.A."/>
            <person name="Tomb J.-F."/>
            <person name="White O."/>
            <person name="Nelson K.E."/>
            <person name="Ketchum K.A."/>
            <person name="Dodson R.J."/>
            <person name="Gwinn M.L."/>
            <person name="Hickey E.K."/>
            <person name="Peterson J.D."/>
            <person name="Richardson D.L."/>
            <person name="Kerlavage A.R."/>
            <person name="Graham D.E."/>
            <person name="Kyrpides N.C."/>
            <person name="Fleischmann R.D."/>
            <person name="Quackenbush J."/>
            <person name="Lee N.H."/>
            <person name="Sutton G.G."/>
            <person name="Gill S.R."/>
            <person name="Kirkness E.F."/>
            <person name="Dougherty B.A."/>
            <person name="McKenney K."/>
            <person name="Adams M.D."/>
            <person name="Loftus B.J."/>
            <person name="Peterson S.N."/>
            <person name="Reich C.I."/>
            <person name="McNeil L.K."/>
            <person name="Badger J.H."/>
            <person name="Glodek A."/>
            <person name="Zhou L."/>
            <person name="Overbeek R."/>
            <person name="Gocayne J.D."/>
            <person name="Weidman J.F."/>
            <person name="McDonald L.A."/>
            <person name="Utterback T.R."/>
            <person name="Cotton M.D."/>
            <person name="Spriggs T."/>
            <person name="Artiach P."/>
            <person name="Kaine B.P."/>
            <person name="Sykes S.M."/>
            <person name="Sadow P.W."/>
            <person name="D'Andrea K.P."/>
            <person name="Bowman C."/>
            <person name="Fujii C."/>
            <person name="Garland S.A."/>
            <person name="Mason T.M."/>
            <person name="Olsen G.J."/>
            <person name="Fraser C.M."/>
            <person name="Smith H.O."/>
            <person name="Woese C.R."/>
            <person name="Venter J.C."/>
        </authorList>
    </citation>
    <scope>NUCLEOTIDE SEQUENCE [LARGE SCALE GENOMIC DNA]</scope>
    <source>
        <strain>ATCC 49558 / DSM 4304 / JCM 9628 / NBRC 100126 / VC-16</strain>
    </source>
</reference>
<proteinExistence type="inferred from homology"/>
<comment type="function">
    <text evidence="1">Catalyzes the conversion of GTP to 2,5-diamino-6-ribosylamino-4(3H)-pyrimidinone 5'-phosphate (DARP), formate and pyrophosphate.</text>
</comment>
<comment type="catalytic activity">
    <reaction>
        <text>GTP + 4 H2O = 2,5-diamino-6-hydroxy-4-(5-phosphoribosylamino)-pyrimidine + formate + 2 phosphate + 3 H(+)</text>
        <dbReference type="Rhea" id="RHEA:23704"/>
        <dbReference type="ChEBI" id="CHEBI:15377"/>
        <dbReference type="ChEBI" id="CHEBI:15378"/>
        <dbReference type="ChEBI" id="CHEBI:15740"/>
        <dbReference type="ChEBI" id="CHEBI:37565"/>
        <dbReference type="ChEBI" id="CHEBI:43474"/>
        <dbReference type="ChEBI" id="CHEBI:58614"/>
        <dbReference type="EC" id="3.5.4.25"/>
    </reaction>
</comment>
<comment type="cofactor">
    <cofactor evidence="1">
        <name>Zn(2+)</name>
        <dbReference type="ChEBI" id="CHEBI:29105"/>
    </cofactor>
    <text evidence="1">Binds 1 zinc ion per subunit.</text>
</comment>
<comment type="pathway">
    <text>Cofactor biosynthesis; riboflavin biosynthesis; 5-amino-6-(D-ribitylamino)uracil from GTP: step 1/4.</text>
</comment>
<comment type="similarity">
    <text evidence="3">In the N-terminal section; belongs to the DHBP synthase family.</text>
</comment>
<comment type="similarity">
    <text evidence="3">In the C-terminal section; belongs to the GTP cyclohydrolase II family.</text>
</comment>
<organism>
    <name type="scientific">Archaeoglobus fulgidus (strain ATCC 49558 / DSM 4304 / JCM 9628 / NBRC 100126 / VC-16)</name>
    <dbReference type="NCBI Taxonomy" id="224325"/>
    <lineage>
        <taxon>Archaea</taxon>
        <taxon>Methanobacteriati</taxon>
        <taxon>Methanobacteriota</taxon>
        <taxon>Archaeoglobi</taxon>
        <taxon>Archaeoglobales</taxon>
        <taxon>Archaeoglobaceae</taxon>
        <taxon>Archaeoglobus</taxon>
    </lineage>
</organism>